<comment type="function">
    <text evidence="1">Catalyzes the attachment of proline to tRNA(Pro) in a two-step reaction: proline is first activated by ATP to form Pro-AMP and then transferred to the acceptor end of tRNA(Pro). As ProRS can inadvertently accommodate and process non-cognate amino acids such as alanine and cysteine, to avoid such errors it has two additional distinct editing activities against alanine. One activity is designated as 'pretransfer' editing and involves the tRNA(Pro)-independent hydrolysis of activated Ala-AMP. The other activity is designated 'posttransfer' editing and involves deacylation of mischarged Ala-tRNA(Pro). The misacylated Cys-tRNA(Pro) is not edited by ProRS.</text>
</comment>
<comment type="catalytic activity">
    <reaction evidence="1">
        <text>tRNA(Pro) + L-proline + ATP = L-prolyl-tRNA(Pro) + AMP + diphosphate</text>
        <dbReference type="Rhea" id="RHEA:14305"/>
        <dbReference type="Rhea" id="RHEA-COMP:9700"/>
        <dbReference type="Rhea" id="RHEA-COMP:9702"/>
        <dbReference type="ChEBI" id="CHEBI:30616"/>
        <dbReference type="ChEBI" id="CHEBI:33019"/>
        <dbReference type="ChEBI" id="CHEBI:60039"/>
        <dbReference type="ChEBI" id="CHEBI:78442"/>
        <dbReference type="ChEBI" id="CHEBI:78532"/>
        <dbReference type="ChEBI" id="CHEBI:456215"/>
        <dbReference type="EC" id="6.1.1.15"/>
    </reaction>
</comment>
<comment type="subunit">
    <text evidence="1">Homodimer.</text>
</comment>
<comment type="subcellular location">
    <subcellularLocation>
        <location evidence="1">Cytoplasm</location>
    </subcellularLocation>
</comment>
<comment type="domain">
    <text evidence="1">Consists of three domains: the N-terminal catalytic domain, the editing domain and the C-terminal anticodon-binding domain.</text>
</comment>
<comment type="similarity">
    <text evidence="1">Belongs to the class-II aminoacyl-tRNA synthetase family. ProS type 1 subfamily.</text>
</comment>
<comment type="sequence caution" evidence="2">
    <conflict type="erroneous initiation">
        <sequence resource="EMBL-CDS" id="AAZ98065"/>
    </conflict>
</comment>
<organism>
    <name type="scientific">Thiobacillus denitrificans (strain ATCC 25259 / T1)</name>
    <dbReference type="NCBI Taxonomy" id="292415"/>
    <lineage>
        <taxon>Bacteria</taxon>
        <taxon>Pseudomonadati</taxon>
        <taxon>Pseudomonadota</taxon>
        <taxon>Betaproteobacteria</taxon>
        <taxon>Nitrosomonadales</taxon>
        <taxon>Thiobacillaceae</taxon>
        <taxon>Thiobacillus</taxon>
    </lineage>
</organism>
<evidence type="ECO:0000255" key="1">
    <source>
        <dbReference type="HAMAP-Rule" id="MF_01569"/>
    </source>
</evidence>
<evidence type="ECO:0000305" key="2"/>
<reference key="1">
    <citation type="journal article" date="2006" name="J. Bacteriol.">
        <title>The genome sequence of the obligately chemolithoautotrophic, facultatively anaerobic bacterium Thiobacillus denitrificans.</title>
        <authorList>
            <person name="Beller H.R."/>
            <person name="Chain P.S."/>
            <person name="Letain T.E."/>
            <person name="Chakicherla A."/>
            <person name="Larimer F.W."/>
            <person name="Richardson P.M."/>
            <person name="Coleman M.A."/>
            <person name="Wood A.P."/>
            <person name="Kelly D.P."/>
        </authorList>
    </citation>
    <scope>NUCLEOTIDE SEQUENCE [LARGE SCALE GENOMIC DNA]</scope>
    <source>
        <strain>ATCC 25259 / T1</strain>
    </source>
</reference>
<keyword id="KW-0030">Aminoacyl-tRNA synthetase</keyword>
<keyword id="KW-0067">ATP-binding</keyword>
<keyword id="KW-0963">Cytoplasm</keyword>
<keyword id="KW-0436">Ligase</keyword>
<keyword id="KW-0547">Nucleotide-binding</keyword>
<keyword id="KW-0648">Protein biosynthesis</keyword>
<keyword id="KW-1185">Reference proteome</keyword>
<proteinExistence type="inferred from homology"/>
<gene>
    <name evidence="1" type="primary">proS</name>
    <name type="ordered locus">Tbd_2112</name>
</gene>
<feature type="chain" id="PRO_0000248803" description="Proline--tRNA ligase">
    <location>
        <begin position="1"/>
        <end position="576"/>
    </location>
</feature>
<accession>Q3SH24</accession>
<protein>
    <recommendedName>
        <fullName evidence="1">Proline--tRNA ligase</fullName>
        <ecNumber evidence="1">6.1.1.15</ecNumber>
    </recommendedName>
    <alternativeName>
        <fullName evidence="1">Prolyl-tRNA synthetase</fullName>
        <shortName evidence="1">ProRS</shortName>
    </alternativeName>
</protein>
<dbReference type="EC" id="6.1.1.15" evidence="1"/>
<dbReference type="EMBL" id="CP000116">
    <property type="protein sequence ID" value="AAZ98065.1"/>
    <property type="status" value="ALT_INIT"/>
    <property type="molecule type" value="Genomic_DNA"/>
</dbReference>
<dbReference type="RefSeq" id="WP_041432704.1">
    <property type="nucleotide sequence ID" value="NC_007404.1"/>
</dbReference>
<dbReference type="SMR" id="Q3SH24"/>
<dbReference type="STRING" id="292415.Tbd_2112"/>
<dbReference type="KEGG" id="tbd:Tbd_2112"/>
<dbReference type="eggNOG" id="COG0442">
    <property type="taxonomic scope" value="Bacteria"/>
</dbReference>
<dbReference type="HOGENOM" id="CLU_016739_0_0_4"/>
<dbReference type="OrthoDB" id="9809052at2"/>
<dbReference type="Proteomes" id="UP000008291">
    <property type="component" value="Chromosome"/>
</dbReference>
<dbReference type="GO" id="GO:0005829">
    <property type="term" value="C:cytosol"/>
    <property type="evidence" value="ECO:0007669"/>
    <property type="project" value="TreeGrafter"/>
</dbReference>
<dbReference type="GO" id="GO:0002161">
    <property type="term" value="F:aminoacyl-tRNA deacylase activity"/>
    <property type="evidence" value="ECO:0007669"/>
    <property type="project" value="InterPro"/>
</dbReference>
<dbReference type="GO" id="GO:0005524">
    <property type="term" value="F:ATP binding"/>
    <property type="evidence" value="ECO:0007669"/>
    <property type="project" value="UniProtKB-UniRule"/>
</dbReference>
<dbReference type="GO" id="GO:0004827">
    <property type="term" value="F:proline-tRNA ligase activity"/>
    <property type="evidence" value="ECO:0007669"/>
    <property type="project" value="UniProtKB-UniRule"/>
</dbReference>
<dbReference type="GO" id="GO:0006433">
    <property type="term" value="P:prolyl-tRNA aminoacylation"/>
    <property type="evidence" value="ECO:0007669"/>
    <property type="project" value="UniProtKB-UniRule"/>
</dbReference>
<dbReference type="CDD" id="cd04334">
    <property type="entry name" value="ProRS-INS"/>
    <property type="match status" value="1"/>
</dbReference>
<dbReference type="CDD" id="cd00861">
    <property type="entry name" value="ProRS_anticodon_short"/>
    <property type="match status" value="1"/>
</dbReference>
<dbReference type="CDD" id="cd00779">
    <property type="entry name" value="ProRS_core_prok"/>
    <property type="match status" value="1"/>
</dbReference>
<dbReference type="FunFam" id="3.30.930.10:FF:000043">
    <property type="entry name" value="Proline--tRNA ligase"/>
    <property type="match status" value="1"/>
</dbReference>
<dbReference type="FunFam" id="3.30.930.10:FF:000097">
    <property type="entry name" value="Proline--tRNA ligase"/>
    <property type="match status" value="1"/>
</dbReference>
<dbReference type="Gene3D" id="3.40.50.800">
    <property type="entry name" value="Anticodon-binding domain"/>
    <property type="match status" value="1"/>
</dbReference>
<dbReference type="Gene3D" id="3.30.930.10">
    <property type="entry name" value="Bira Bifunctional Protein, Domain 2"/>
    <property type="match status" value="2"/>
</dbReference>
<dbReference type="Gene3D" id="3.90.960.10">
    <property type="entry name" value="YbaK/aminoacyl-tRNA synthetase-associated domain"/>
    <property type="match status" value="1"/>
</dbReference>
<dbReference type="HAMAP" id="MF_01569">
    <property type="entry name" value="Pro_tRNA_synth_type1"/>
    <property type="match status" value="1"/>
</dbReference>
<dbReference type="InterPro" id="IPR002314">
    <property type="entry name" value="aa-tRNA-synt_IIb"/>
</dbReference>
<dbReference type="InterPro" id="IPR006195">
    <property type="entry name" value="aa-tRNA-synth_II"/>
</dbReference>
<dbReference type="InterPro" id="IPR045864">
    <property type="entry name" value="aa-tRNA-synth_II/BPL/LPL"/>
</dbReference>
<dbReference type="InterPro" id="IPR004154">
    <property type="entry name" value="Anticodon-bd"/>
</dbReference>
<dbReference type="InterPro" id="IPR036621">
    <property type="entry name" value="Anticodon-bd_dom_sf"/>
</dbReference>
<dbReference type="InterPro" id="IPR002316">
    <property type="entry name" value="Pro-tRNA-ligase_IIa"/>
</dbReference>
<dbReference type="InterPro" id="IPR004500">
    <property type="entry name" value="Pro-tRNA-synth_IIa_bac-type"/>
</dbReference>
<dbReference type="InterPro" id="IPR023717">
    <property type="entry name" value="Pro-tRNA-Synthase_IIa_type1"/>
</dbReference>
<dbReference type="InterPro" id="IPR050062">
    <property type="entry name" value="Pro-tRNA_synthetase"/>
</dbReference>
<dbReference type="InterPro" id="IPR044140">
    <property type="entry name" value="ProRS_anticodon_short"/>
</dbReference>
<dbReference type="InterPro" id="IPR033730">
    <property type="entry name" value="ProRS_core_prok"/>
</dbReference>
<dbReference type="InterPro" id="IPR036754">
    <property type="entry name" value="YbaK/aa-tRNA-synt-asso_dom_sf"/>
</dbReference>
<dbReference type="InterPro" id="IPR007214">
    <property type="entry name" value="YbaK/aa-tRNA-synth-assoc-dom"/>
</dbReference>
<dbReference type="NCBIfam" id="NF006625">
    <property type="entry name" value="PRK09194.1"/>
    <property type="match status" value="1"/>
</dbReference>
<dbReference type="NCBIfam" id="TIGR00409">
    <property type="entry name" value="proS_fam_II"/>
    <property type="match status" value="1"/>
</dbReference>
<dbReference type="PANTHER" id="PTHR42753">
    <property type="entry name" value="MITOCHONDRIAL RIBOSOME PROTEIN L39/PROLYL-TRNA LIGASE FAMILY MEMBER"/>
    <property type="match status" value="1"/>
</dbReference>
<dbReference type="PANTHER" id="PTHR42753:SF2">
    <property type="entry name" value="PROLINE--TRNA LIGASE"/>
    <property type="match status" value="1"/>
</dbReference>
<dbReference type="Pfam" id="PF03129">
    <property type="entry name" value="HGTP_anticodon"/>
    <property type="match status" value="1"/>
</dbReference>
<dbReference type="Pfam" id="PF00587">
    <property type="entry name" value="tRNA-synt_2b"/>
    <property type="match status" value="1"/>
</dbReference>
<dbReference type="Pfam" id="PF04073">
    <property type="entry name" value="tRNA_edit"/>
    <property type="match status" value="1"/>
</dbReference>
<dbReference type="PIRSF" id="PIRSF001535">
    <property type="entry name" value="ProRS_1"/>
    <property type="match status" value="1"/>
</dbReference>
<dbReference type="PRINTS" id="PR01046">
    <property type="entry name" value="TRNASYNTHPRO"/>
</dbReference>
<dbReference type="SUPFAM" id="SSF52954">
    <property type="entry name" value="Class II aaRS ABD-related"/>
    <property type="match status" value="1"/>
</dbReference>
<dbReference type="SUPFAM" id="SSF55681">
    <property type="entry name" value="Class II aaRS and biotin synthetases"/>
    <property type="match status" value="1"/>
</dbReference>
<dbReference type="SUPFAM" id="SSF55826">
    <property type="entry name" value="YbaK/ProRS associated domain"/>
    <property type="match status" value="1"/>
</dbReference>
<dbReference type="PROSITE" id="PS50862">
    <property type="entry name" value="AA_TRNA_LIGASE_II"/>
    <property type="match status" value="1"/>
</dbReference>
<sequence>MRTTQFFLSTTKEAPSEAELVSHKLMLRAGLIKRLGSGLYTWMPLGLRVLRRVEAVVREEMNRAGAIELLMPAVQPAELWQETGRWAQFGPQMLKIKDRHEREFCFGPTHEEVITDLARREIKSYRQLPLNFYQIQTKFRDEIRPRFGVMRAREFLMKDAYSFHASRESLAATYQAMYDAYGRIFTRLGLRFRAVAADTGAIGGSASHEFHVLADSGEDLIAYCPDSDYAANVELAEALAPAAARGAPQEAMREVETPKQTTCEDVAALLGIPLARTVKLIAVMAGERMVVVLLRGDHMLNEVKLAKIEGLADFRLANEAEIRAVFDCPPGFLGPVGIDRSTIRVIADRAVAVMSDFVCGANKPKFHLAGVNFGRDLQEPDLVADIRNVVAGDPSPDGKGTLALCRGIEVGHVFQLGNKYSQAMNATYLDEAGKAQAMEMGCYGIGVSRIVAAAVEQNHDGKGIVWPASMAPFSVVIVAIGYGKSASVKNAADTLYADLMAVGVEVLLDDRDERPGVMFADAELVGIPHRVTLGERGLNEGVVEYQPRRAAPEQGADARKIAVAEAKAFLMGVLGD</sequence>
<name>SYP_THIDA</name>